<reference key="1">
    <citation type="submission" date="1994-09" db="EMBL/GenBank/DDBJ databases">
        <authorList>
            <person name="Smith D.R."/>
            <person name="Robison K."/>
        </authorList>
    </citation>
    <scope>NUCLEOTIDE SEQUENCE [GENOMIC DNA]</scope>
</reference>
<reference key="2">
    <citation type="journal article" date="2001" name="Nature">
        <title>Massive gene decay in the leprosy bacillus.</title>
        <authorList>
            <person name="Cole S.T."/>
            <person name="Eiglmeier K."/>
            <person name="Parkhill J."/>
            <person name="James K.D."/>
            <person name="Thomson N.R."/>
            <person name="Wheeler P.R."/>
            <person name="Honore N."/>
            <person name="Garnier T."/>
            <person name="Churcher C.M."/>
            <person name="Harris D.E."/>
            <person name="Mungall K.L."/>
            <person name="Basham D."/>
            <person name="Brown D."/>
            <person name="Chillingworth T."/>
            <person name="Connor R."/>
            <person name="Davies R.M."/>
            <person name="Devlin K."/>
            <person name="Duthoy S."/>
            <person name="Feltwell T."/>
            <person name="Fraser A."/>
            <person name="Hamlin N."/>
            <person name="Holroyd S."/>
            <person name="Hornsby T."/>
            <person name="Jagels K."/>
            <person name="Lacroix C."/>
            <person name="Maclean J."/>
            <person name="Moule S."/>
            <person name="Murphy L.D."/>
            <person name="Oliver K."/>
            <person name="Quail M.A."/>
            <person name="Rajandream M.A."/>
            <person name="Rutherford K.M."/>
            <person name="Rutter S."/>
            <person name="Seeger K."/>
            <person name="Simon S."/>
            <person name="Simmonds M."/>
            <person name="Skelton J."/>
            <person name="Squares R."/>
            <person name="Squares S."/>
            <person name="Stevens K."/>
            <person name="Taylor K."/>
            <person name="Whitehead S."/>
            <person name="Woodward J.R."/>
            <person name="Barrell B.G."/>
        </authorList>
    </citation>
    <scope>NUCLEOTIDE SEQUENCE [LARGE SCALE GENOMIC DNA]</scope>
    <source>
        <strain>TN</strain>
    </source>
</reference>
<keyword id="KW-0067">ATP-binding</keyword>
<keyword id="KW-0418">Kinase</keyword>
<keyword id="KW-0547">Nucleotide-binding</keyword>
<keyword id="KW-1185">Reference proteome</keyword>
<keyword id="KW-0808">Transferase</keyword>
<evidence type="ECO:0000250" key="1">
    <source>
        <dbReference type="UniProtKB" id="A5U654"/>
    </source>
</evidence>
<evidence type="ECO:0000255" key="2"/>
<evidence type="ECO:0000256" key="3">
    <source>
        <dbReference type="SAM" id="MobiDB-lite"/>
    </source>
</evidence>
<evidence type="ECO:0000305" key="4"/>
<sequence>MIRLRSAAARDRCQVLSLAYRITVAGRCQTVSPHHRQAKVSEQPSLAKEIAITSTDATADTPRTSPPSDTAGTTSRHRGFGIDIGGSSIKGGIVDLDIGQLIGDRIKLLTPQPATPLAVAKTIAEVVNAFGWTAPLGVTYPGVVTQGVVRTAANVDDSWIGTNARDIISAELNSQEVTILNDADAAGLAEGRYGAGKNNSGLIVLLTFGTGIGSAVIHNGKLIPNTEFGHLEVDGKEAEQRAASSVKDKYKWSYRTWAKQVTRVLVAIENAMCPDLFIAGGGISRKADRWIPLLENRTPMVAAALQNTAGIVGAAMASTADVTH</sequence>
<comment type="function">
    <text evidence="1">Catalyzes the phosphorylation of glucose using polyphosphate or ATP as the phosphoryl donor.</text>
</comment>
<comment type="catalytic activity">
    <reaction evidence="1">
        <text>[phosphate](n) + D-glucose = [phosphate](n-1) + D-glucose 6-phosphate + H(+)</text>
        <dbReference type="Rhea" id="RHEA:22036"/>
        <dbReference type="Rhea" id="RHEA-COMP:9859"/>
        <dbReference type="Rhea" id="RHEA-COMP:14279"/>
        <dbReference type="ChEBI" id="CHEBI:4167"/>
        <dbReference type="ChEBI" id="CHEBI:15378"/>
        <dbReference type="ChEBI" id="CHEBI:16838"/>
        <dbReference type="ChEBI" id="CHEBI:61548"/>
        <dbReference type="EC" id="2.7.1.63"/>
    </reaction>
</comment>
<comment type="catalytic activity">
    <reaction evidence="1">
        <text>D-glucose + ATP = D-glucose 6-phosphate + ADP + H(+)</text>
        <dbReference type="Rhea" id="RHEA:17825"/>
        <dbReference type="ChEBI" id="CHEBI:4167"/>
        <dbReference type="ChEBI" id="CHEBI:15378"/>
        <dbReference type="ChEBI" id="CHEBI:30616"/>
        <dbReference type="ChEBI" id="CHEBI:61548"/>
        <dbReference type="ChEBI" id="CHEBI:456216"/>
        <dbReference type="EC" id="2.7.1.2"/>
    </reaction>
</comment>
<comment type="subunit">
    <text evidence="1">Homodimer.</text>
</comment>
<comment type="miscellaneous">
    <text evidence="1">The poly(P)- and ATP-dependent glucokinase reactions both follow an ordered Bi-Bi mechanism, with glucose being the second substrate to bind and glucose 6-phosphate being released last. The mechanism of poly(P) utilization is not strictly processive and is most likely nonprocessive, where there is dissociation of poly(P) prior to complete utilization.</text>
</comment>
<comment type="similarity">
    <text evidence="4">Belongs to the ROK (NagC/XylR) family.</text>
</comment>
<gene>
    <name type="primary">ppgK</name>
    <name type="ordered locus">ML1023</name>
    <name type="ORF">u1764fg</name>
</gene>
<feature type="chain" id="PRO_0000058535" description="Polyphosphate glucokinase">
    <location>
        <begin position="1"/>
        <end position="324"/>
    </location>
</feature>
<feature type="region of interest" description="Disordered" evidence="3">
    <location>
        <begin position="53"/>
        <end position="79"/>
    </location>
</feature>
<feature type="compositionally biased region" description="Polar residues" evidence="3">
    <location>
        <begin position="62"/>
        <end position="74"/>
    </location>
</feature>
<feature type="binding site" evidence="2">
    <location>
        <begin position="83"/>
        <end position="88"/>
    </location>
    <ligand>
        <name>ATP</name>
        <dbReference type="ChEBI" id="CHEBI:30616"/>
    </ligand>
</feature>
<accession>Q49988</accession>
<protein>
    <recommendedName>
        <fullName>Polyphosphate glucokinase</fullName>
        <ecNumber>2.7.1.63</ecNumber>
    </recommendedName>
    <alternativeName>
        <fullName>ATP-dependent glucokinase</fullName>
        <ecNumber>2.7.1.2</ecNumber>
    </alternativeName>
    <alternativeName>
        <fullName>Polyphosphate--glucose phosphotransferase</fullName>
    </alternativeName>
</protein>
<organism>
    <name type="scientific">Mycobacterium leprae (strain TN)</name>
    <dbReference type="NCBI Taxonomy" id="272631"/>
    <lineage>
        <taxon>Bacteria</taxon>
        <taxon>Bacillati</taxon>
        <taxon>Actinomycetota</taxon>
        <taxon>Actinomycetes</taxon>
        <taxon>Mycobacteriales</taxon>
        <taxon>Mycobacteriaceae</taxon>
        <taxon>Mycobacterium</taxon>
    </lineage>
</organism>
<dbReference type="EC" id="2.7.1.63"/>
<dbReference type="EC" id="2.7.1.2"/>
<dbReference type="EMBL" id="U15181">
    <property type="protein sequence ID" value="AAA62940.1"/>
    <property type="molecule type" value="Genomic_DNA"/>
</dbReference>
<dbReference type="EMBL" id="AL583920">
    <property type="protein sequence ID" value="CAC31404.1"/>
    <property type="molecule type" value="Genomic_DNA"/>
</dbReference>
<dbReference type="PIR" id="A87037">
    <property type="entry name" value="A87037"/>
</dbReference>
<dbReference type="RefSeq" id="NP_301756.1">
    <property type="nucleotide sequence ID" value="NC_002677.1"/>
</dbReference>
<dbReference type="SMR" id="Q49988"/>
<dbReference type="STRING" id="272631.gene:17574849"/>
<dbReference type="KEGG" id="mle:ML1023"/>
<dbReference type="PATRIC" id="fig|272631.5.peg.1852"/>
<dbReference type="Leproma" id="ML1023"/>
<dbReference type="eggNOG" id="COG1940">
    <property type="taxonomic scope" value="Bacteria"/>
</dbReference>
<dbReference type="HOGENOM" id="CLU_065796_0_0_11"/>
<dbReference type="OrthoDB" id="849313at2"/>
<dbReference type="Proteomes" id="UP000000806">
    <property type="component" value="Chromosome"/>
</dbReference>
<dbReference type="GO" id="GO:0005524">
    <property type="term" value="F:ATP binding"/>
    <property type="evidence" value="ECO:0007669"/>
    <property type="project" value="UniProtKB-KW"/>
</dbReference>
<dbReference type="GO" id="GO:0004340">
    <property type="term" value="F:glucokinase activity"/>
    <property type="evidence" value="ECO:0007669"/>
    <property type="project" value="UniProtKB-EC"/>
</dbReference>
<dbReference type="GO" id="GO:0047330">
    <property type="term" value="F:polyphosphate-glucose phosphotransferase activity"/>
    <property type="evidence" value="ECO:0007669"/>
    <property type="project" value="UniProtKB-EC"/>
</dbReference>
<dbReference type="CDD" id="cd24058">
    <property type="entry name" value="ASKHA_NBD_ROK_PPGK"/>
    <property type="match status" value="1"/>
</dbReference>
<dbReference type="Gene3D" id="3.30.420.40">
    <property type="match status" value="2"/>
</dbReference>
<dbReference type="InterPro" id="IPR043129">
    <property type="entry name" value="ATPase_NBD"/>
</dbReference>
<dbReference type="InterPro" id="IPR000600">
    <property type="entry name" value="ROK"/>
</dbReference>
<dbReference type="NCBIfam" id="NF045942">
    <property type="entry name" value="PolPhglucPhase"/>
    <property type="match status" value="1"/>
</dbReference>
<dbReference type="PANTHER" id="PTHR18964:SF146">
    <property type="entry name" value="POLYPHOSPHATE GLUCOKINASE"/>
    <property type="match status" value="1"/>
</dbReference>
<dbReference type="PANTHER" id="PTHR18964">
    <property type="entry name" value="ROK (REPRESSOR, ORF, KINASE) FAMILY"/>
    <property type="match status" value="1"/>
</dbReference>
<dbReference type="Pfam" id="PF00480">
    <property type="entry name" value="ROK"/>
    <property type="match status" value="1"/>
</dbReference>
<dbReference type="SUPFAM" id="SSF53067">
    <property type="entry name" value="Actin-like ATPase domain"/>
    <property type="match status" value="1"/>
</dbReference>
<name>PPGK_MYCLE</name>
<proteinExistence type="inferred from homology"/>